<keyword id="KW-0067">ATP-binding</keyword>
<keyword id="KW-0436">Ligase</keyword>
<keyword id="KW-0547">Nucleotide-binding</keyword>
<proteinExistence type="inferred from homology"/>
<feature type="chain" id="PRO_0000208405" description="Acetyl-coenzyme A synthetase 1">
    <location>
        <begin position="1"/>
        <end position="675"/>
    </location>
</feature>
<feature type="region of interest" description="Disordered" evidence="2">
    <location>
        <begin position="1"/>
        <end position="32"/>
    </location>
</feature>
<feature type="compositionally biased region" description="Polar residues" evidence="2">
    <location>
        <begin position="1"/>
        <end position="10"/>
    </location>
</feature>
<feature type="binding site" evidence="1">
    <location>
        <begin position="212"/>
        <end position="215"/>
    </location>
    <ligand>
        <name>CoA</name>
        <dbReference type="ChEBI" id="CHEBI:57287"/>
    </ligand>
</feature>
<feature type="binding site" evidence="1">
    <location>
        <position position="331"/>
    </location>
    <ligand>
        <name>CoA</name>
        <dbReference type="ChEBI" id="CHEBI:57287"/>
    </ligand>
</feature>
<feature type="binding site" evidence="1">
    <location>
        <begin position="407"/>
        <end position="409"/>
    </location>
    <ligand>
        <name>ATP</name>
        <dbReference type="ChEBI" id="CHEBI:30616"/>
    </ligand>
</feature>
<feature type="binding site" evidence="1">
    <location>
        <begin position="431"/>
        <end position="436"/>
    </location>
    <ligand>
        <name>ATP</name>
        <dbReference type="ChEBI" id="CHEBI:30616"/>
    </ligand>
</feature>
<feature type="binding site" evidence="1">
    <location>
        <position position="522"/>
    </location>
    <ligand>
        <name>ATP</name>
        <dbReference type="ChEBI" id="CHEBI:30616"/>
    </ligand>
</feature>
<feature type="binding site" evidence="1">
    <location>
        <position position="537"/>
    </location>
    <ligand>
        <name>ATP</name>
        <dbReference type="ChEBI" id="CHEBI:30616"/>
    </ligand>
</feature>
<feature type="binding site" evidence="1">
    <location>
        <position position="545"/>
    </location>
    <ligand>
        <name>CoA</name>
        <dbReference type="ChEBI" id="CHEBI:57287"/>
    </ligand>
</feature>
<feature type="binding site" evidence="1">
    <location>
        <position position="548"/>
    </location>
    <ligand>
        <name>ATP</name>
        <dbReference type="ChEBI" id="CHEBI:30616"/>
    </ligand>
</feature>
<feature type="binding site" evidence="1">
    <location>
        <position position="609"/>
    </location>
    <ligand>
        <name>CoA</name>
        <dbReference type="ChEBI" id="CHEBI:57287"/>
    </ligand>
</feature>
<feature type="sequence variant">
    <original>N</original>
    <variation>K</variation>
    <location>
        <position position="504"/>
    </location>
</feature>
<feature type="sequence variant">
    <original>N</original>
    <variation>D</variation>
    <location>
        <position position="543"/>
    </location>
</feature>
<reference key="1">
    <citation type="submission" date="1998-11" db="EMBL/GenBank/DDBJ databases">
        <title>Candida albicans strain 1161 genome pilot sequencing project.</title>
        <authorList>
            <person name="Oliver K."/>
            <person name="Harris D."/>
            <person name="Barrell B.G."/>
            <person name="Rajandream M.A."/>
        </authorList>
    </citation>
    <scope>NUCLEOTIDE SEQUENCE [LARGE SCALE GENOMIC DNA]</scope>
    <source>
        <strain>1161</strain>
    </source>
</reference>
<comment type="catalytic activity">
    <reaction>
        <text>acetate + ATP + CoA = acetyl-CoA + AMP + diphosphate</text>
        <dbReference type="Rhea" id="RHEA:23176"/>
        <dbReference type="ChEBI" id="CHEBI:30089"/>
        <dbReference type="ChEBI" id="CHEBI:30616"/>
        <dbReference type="ChEBI" id="CHEBI:33019"/>
        <dbReference type="ChEBI" id="CHEBI:57287"/>
        <dbReference type="ChEBI" id="CHEBI:57288"/>
        <dbReference type="ChEBI" id="CHEBI:456215"/>
        <dbReference type="EC" id="6.2.1.1"/>
    </reaction>
</comment>
<comment type="similarity">
    <text evidence="3">Belongs to the ATP-dependent AMP-binding enzyme family.</text>
</comment>
<dbReference type="EC" id="6.2.1.1"/>
<dbReference type="EMBL" id="AL033502">
    <property type="protein sequence ID" value="CAA22000.1"/>
    <property type="molecule type" value="Genomic_DNA"/>
</dbReference>
<dbReference type="SMR" id="O94049"/>
<dbReference type="CGD" id="CAL0000184618">
    <property type="gene designation" value="ACS1"/>
</dbReference>
<dbReference type="VEuPathDB" id="FungiDB:C2_10350C_A"/>
<dbReference type="VEuPathDB" id="FungiDB:CAWG_06106"/>
<dbReference type="GO" id="GO:0005829">
    <property type="term" value="C:cytosol"/>
    <property type="evidence" value="ECO:0000247"/>
    <property type="project" value="CGD"/>
</dbReference>
<dbReference type="GO" id="GO:0003987">
    <property type="term" value="F:acetate-CoA ligase activity"/>
    <property type="evidence" value="ECO:0000247"/>
    <property type="project" value="CGD"/>
</dbReference>
<dbReference type="GO" id="GO:0016208">
    <property type="term" value="F:AMP binding"/>
    <property type="evidence" value="ECO:0007669"/>
    <property type="project" value="InterPro"/>
</dbReference>
<dbReference type="GO" id="GO:0005524">
    <property type="term" value="F:ATP binding"/>
    <property type="evidence" value="ECO:0007669"/>
    <property type="project" value="UniProtKB-KW"/>
</dbReference>
<dbReference type="GO" id="GO:0006085">
    <property type="term" value="P:acetyl-CoA biosynthetic process"/>
    <property type="evidence" value="ECO:0000247"/>
    <property type="project" value="CGD"/>
</dbReference>
<dbReference type="GO" id="GO:0019427">
    <property type="term" value="P:acetyl-CoA biosynthetic process from acetate"/>
    <property type="evidence" value="ECO:0007669"/>
    <property type="project" value="InterPro"/>
</dbReference>
<dbReference type="CDD" id="cd05966">
    <property type="entry name" value="ACS"/>
    <property type="match status" value="1"/>
</dbReference>
<dbReference type="FunFam" id="3.30.300.30:FF:000004">
    <property type="entry name" value="Acetyl-coenzyme A synthetase"/>
    <property type="match status" value="1"/>
</dbReference>
<dbReference type="FunFam" id="3.40.50.12780:FF:000001">
    <property type="entry name" value="Acetyl-coenzyme A synthetase"/>
    <property type="match status" value="1"/>
</dbReference>
<dbReference type="Gene3D" id="3.30.300.30">
    <property type="match status" value="1"/>
</dbReference>
<dbReference type="Gene3D" id="3.40.50.12780">
    <property type="entry name" value="N-terminal domain of ligase-like"/>
    <property type="match status" value="1"/>
</dbReference>
<dbReference type="InterPro" id="IPR011904">
    <property type="entry name" value="Ac_CoA_lig"/>
</dbReference>
<dbReference type="InterPro" id="IPR032387">
    <property type="entry name" value="ACAS_N"/>
</dbReference>
<dbReference type="InterPro" id="IPR025110">
    <property type="entry name" value="AMP-bd_C"/>
</dbReference>
<dbReference type="InterPro" id="IPR045851">
    <property type="entry name" value="AMP-bd_C_sf"/>
</dbReference>
<dbReference type="InterPro" id="IPR020845">
    <property type="entry name" value="AMP-binding_CS"/>
</dbReference>
<dbReference type="InterPro" id="IPR000873">
    <property type="entry name" value="AMP-dep_synth/lig_dom"/>
</dbReference>
<dbReference type="InterPro" id="IPR042099">
    <property type="entry name" value="ANL_N_sf"/>
</dbReference>
<dbReference type="NCBIfam" id="TIGR02188">
    <property type="entry name" value="Ac_CoA_lig_AcsA"/>
    <property type="match status" value="1"/>
</dbReference>
<dbReference type="NCBIfam" id="NF001208">
    <property type="entry name" value="PRK00174.1"/>
    <property type="match status" value="1"/>
</dbReference>
<dbReference type="PANTHER" id="PTHR24095">
    <property type="entry name" value="ACETYL-COENZYME A SYNTHETASE"/>
    <property type="match status" value="1"/>
</dbReference>
<dbReference type="PANTHER" id="PTHR24095:SF14">
    <property type="entry name" value="ACETYL-COENZYME A SYNTHETASE 1"/>
    <property type="match status" value="1"/>
</dbReference>
<dbReference type="Pfam" id="PF16177">
    <property type="entry name" value="ACAS_N"/>
    <property type="match status" value="1"/>
</dbReference>
<dbReference type="Pfam" id="PF00501">
    <property type="entry name" value="AMP-binding"/>
    <property type="match status" value="1"/>
</dbReference>
<dbReference type="Pfam" id="PF13193">
    <property type="entry name" value="AMP-binding_C"/>
    <property type="match status" value="1"/>
</dbReference>
<dbReference type="SUPFAM" id="SSF56801">
    <property type="entry name" value="Acetyl-CoA synthetase-like"/>
    <property type="match status" value="1"/>
</dbReference>
<dbReference type="PROSITE" id="PS00455">
    <property type="entry name" value="AMP_BINDING"/>
    <property type="match status" value="1"/>
</dbReference>
<organism>
    <name type="scientific">Candida albicans</name>
    <name type="common">Yeast</name>
    <dbReference type="NCBI Taxonomy" id="5476"/>
    <lineage>
        <taxon>Eukaryota</taxon>
        <taxon>Fungi</taxon>
        <taxon>Dikarya</taxon>
        <taxon>Ascomycota</taxon>
        <taxon>Saccharomycotina</taxon>
        <taxon>Pichiomycetes</taxon>
        <taxon>Debaryomycetaceae</taxon>
        <taxon>Candida/Lodderomyces clade</taxon>
        <taxon>Candida</taxon>
    </lineage>
</organism>
<name>ACS1_CANAX</name>
<accession>O94049</accession>
<evidence type="ECO:0000250" key="1"/>
<evidence type="ECO:0000256" key="2">
    <source>
        <dbReference type="SAM" id="MobiDB-lite"/>
    </source>
</evidence>
<evidence type="ECO:0000305" key="3"/>
<gene>
    <name type="primary">ACS1</name>
    <name type="ORF">Ca38F10.03</name>
</gene>
<sequence length="675" mass="75100">MPESTQQSHLSLDHEKMQQPPKGFTERSKTKPNLADFETYQKLYKQSIENPNEFFTQQAKENLDWFKPFDLARFPVDPKDDYKNGDLPAWFINGQLNACYNAVDRWAIKNPDKPAIIYEGDEPDQGRIITYGELLKQVSKLAQALTKLGVKKGDSVAVYLPMIPEAIVTLLAIVRIGAMHSVVFAGFSSASLRDRILDADSRIVITADESKRGGKTIETKKIVDDALKECPKVRNVIVFKRTGNSHVPFSPGRDLWWHDEMAKYGPYFPPVPVNSEDPLFLLYTSGSTGKPKGVQHNTAGYLLGAVLTTKYTFDVHEDDILFTAGDIGWITGHTYCVYGPLLAGATSVVFEGTPAYPNYSRYWEIVDKYKVNQFYVAPTALRLLKRAGTKYVEKYDLSSLRVLGSVGEPIAAEVWHWYNDNIGRGQAHIVDTYWQTESGSHLLTPLAGITPTKPGSASLPFFGVDPKILDPTTGEELPDNDVEGVLAIKSAWPSITRGIYNDYNRFIDTYLAPYANYYFSGDGAARDRDGFYWILGRVDDVVNVSGHRLSTAEIEAALIEHPIVGESAVVGYADELTGQAVAAYVSLKKDKAVGEDVENIKKEMILTVRKEIGPFAAPKMILLVDDLPKTRSGKIMRRILRKVLAGEEDQLGDISTLSNPGVVQQIIDVVHHAKK</sequence>
<protein>
    <recommendedName>
        <fullName>Acetyl-coenzyme A synthetase 1</fullName>
        <ecNumber>6.2.1.1</ecNumber>
    </recommendedName>
    <alternativeName>
        <fullName>Acetate--CoA ligase 1</fullName>
    </alternativeName>
    <alternativeName>
        <fullName>Acyl-activating enzyme 1</fullName>
    </alternativeName>
</protein>